<gene>
    <name evidence="2" type="primary">SPH22</name>
    <name evidence="5" type="ordered locus">At3g26870</name>
    <name evidence="6" type="ORF">MDJ14.21</name>
</gene>
<reference key="1">
    <citation type="journal article" date="2000" name="DNA Res.">
        <title>Structural analysis of Arabidopsis thaliana chromosome 3. I. Sequence features of the regions of 4,504,864 bp covered by sixty P1 and TAC clones.</title>
        <authorList>
            <person name="Sato S."/>
            <person name="Nakamura Y."/>
            <person name="Kaneko T."/>
            <person name="Katoh T."/>
            <person name="Asamizu E."/>
            <person name="Tabata S."/>
        </authorList>
    </citation>
    <scope>NUCLEOTIDE SEQUENCE [LARGE SCALE GENOMIC DNA]</scope>
    <source>
        <strain>cv. Columbia</strain>
    </source>
</reference>
<reference key="2">
    <citation type="journal article" date="2017" name="Plant J.">
        <title>Araport11: a complete reannotation of the Arabidopsis thaliana reference genome.</title>
        <authorList>
            <person name="Cheng C.Y."/>
            <person name="Krishnakumar V."/>
            <person name="Chan A.P."/>
            <person name="Thibaud-Nissen F."/>
            <person name="Schobel S."/>
            <person name="Town C.D."/>
        </authorList>
    </citation>
    <scope>GENOME REANNOTATION</scope>
    <source>
        <strain>cv. Columbia</strain>
    </source>
</reference>
<reference key="3">
    <citation type="journal article" date="1999" name="Plant Mol. Biol.">
        <title>Analysis of Arabidopsis genome sequence reveals a large new gene family in plants.</title>
        <authorList>
            <person name="Ride J.P."/>
            <person name="Davies E.M."/>
            <person name="Franklin F.C.H."/>
            <person name="Marshall D.F."/>
        </authorList>
    </citation>
    <scope>GENE FAMILY</scope>
    <scope>NOMENCLATURE</scope>
    <source>
        <strain>cv. Columbia</strain>
    </source>
</reference>
<accession>Q9LW23</accession>
<name>SPH22_ARATH</name>
<keyword id="KW-1185">Reference proteome</keyword>
<keyword id="KW-0964">Secreted</keyword>
<keyword id="KW-0713">Self-incompatibility</keyword>
<keyword id="KW-0732">Signal</keyword>
<organism>
    <name type="scientific">Arabidopsis thaliana</name>
    <name type="common">Mouse-ear cress</name>
    <dbReference type="NCBI Taxonomy" id="3702"/>
    <lineage>
        <taxon>Eukaryota</taxon>
        <taxon>Viridiplantae</taxon>
        <taxon>Streptophyta</taxon>
        <taxon>Embryophyta</taxon>
        <taxon>Tracheophyta</taxon>
        <taxon>Spermatophyta</taxon>
        <taxon>Magnoliopsida</taxon>
        <taxon>eudicotyledons</taxon>
        <taxon>Gunneridae</taxon>
        <taxon>Pentapetalae</taxon>
        <taxon>rosids</taxon>
        <taxon>malvids</taxon>
        <taxon>Brassicales</taxon>
        <taxon>Brassicaceae</taxon>
        <taxon>Camelineae</taxon>
        <taxon>Arabidopsis</taxon>
    </lineage>
</organism>
<evidence type="ECO:0000255" key="1"/>
<evidence type="ECO:0000303" key="2">
    <source>
    </source>
</evidence>
<evidence type="ECO:0000305" key="3"/>
<evidence type="ECO:0000305" key="4">
    <source>
    </source>
</evidence>
<evidence type="ECO:0000312" key="5">
    <source>
        <dbReference type="Araport" id="AT3G26870"/>
    </source>
</evidence>
<evidence type="ECO:0000312" key="6">
    <source>
        <dbReference type="EMBL" id="BAB01234.1"/>
    </source>
</evidence>
<proteinExistence type="inferred from homology"/>
<comment type="subcellular location">
    <subcellularLocation>
        <location evidence="4">Secreted</location>
    </subcellularLocation>
</comment>
<comment type="similarity">
    <text evidence="3">Belongs to the plant self-incompatibility (S1) protein family.</text>
</comment>
<feature type="signal peptide" evidence="1">
    <location>
        <begin position="1"/>
        <end position="21"/>
    </location>
</feature>
<feature type="chain" id="PRO_5009348609" description="S-protein homolog 22">
    <location>
        <begin position="22"/>
        <end position="130"/>
    </location>
</feature>
<protein>
    <recommendedName>
        <fullName evidence="2">S-protein homolog 22</fullName>
    </recommendedName>
</protein>
<dbReference type="EMBL" id="AB016889">
    <property type="protein sequence ID" value="BAB01234.1"/>
    <property type="molecule type" value="Genomic_DNA"/>
</dbReference>
<dbReference type="EMBL" id="CP002686">
    <property type="protein sequence ID" value="AEE77227.1"/>
    <property type="molecule type" value="Genomic_DNA"/>
</dbReference>
<dbReference type="RefSeq" id="NP_189322.1">
    <property type="nucleotide sequence ID" value="NM_113599.1"/>
</dbReference>
<dbReference type="SMR" id="Q9LW23"/>
<dbReference type="PaxDb" id="3702-AT3G26870.1"/>
<dbReference type="ProteomicsDB" id="232529"/>
<dbReference type="EnsemblPlants" id="AT3G26870.1">
    <property type="protein sequence ID" value="AT3G26870.1"/>
    <property type="gene ID" value="AT3G26870"/>
</dbReference>
<dbReference type="GeneID" id="822303"/>
<dbReference type="Gramene" id="AT3G26870.1">
    <property type="protein sequence ID" value="AT3G26870.1"/>
    <property type="gene ID" value="AT3G26870"/>
</dbReference>
<dbReference type="KEGG" id="ath:AT3G26870"/>
<dbReference type="Araport" id="AT3G26870"/>
<dbReference type="TAIR" id="AT3G26870"/>
<dbReference type="HOGENOM" id="CLU_125658_3_2_1"/>
<dbReference type="InParanoid" id="Q9LW23"/>
<dbReference type="OMA" id="TDYFFHN"/>
<dbReference type="PhylomeDB" id="Q9LW23"/>
<dbReference type="PRO" id="PR:Q9LW23"/>
<dbReference type="Proteomes" id="UP000006548">
    <property type="component" value="Chromosome 3"/>
</dbReference>
<dbReference type="ExpressionAtlas" id="Q9LW23">
    <property type="expression patterns" value="baseline and differential"/>
</dbReference>
<dbReference type="GO" id="GO:0005576">
    <property type="term" value="C:extracellular region"/>
    <property type="evidence" value="ECO:0007669"/>
    <property type="project" value="UniProtKB-SubCell"/>
</dbReference>
<dbReference type="GO" id="GO:0009860">
    <property type="term" value="P:pollen tube growth"/>
    <property type="evidence" value="ECO:0000270"/>
    <property type="project" value="TAIR"/>
</dbReference>
<dbReference type="GO" id="GO:0060320">
    <property type="term" value="P:rejection of self pollen"/>
    <property type="evidence" value="ECO:0007669"/>
    <property type="project" value="UniProtKB-KW"/>
</dbReference>
<dbReference type="InterPro" id="IPR010264">
    <property type="entry name" value="Self-incomp_S1"/>
</dbReference>
<dbReference type="PANTHER" id="PTHR31232">
    <property type="match status" value="1"/>
</dbReference>
<dbReference type="PANTHER" id="PTHR31232:SF54">
    <property type="entry name" value="S-PROTEIN HOMOLOG-RELATED"/>
    <property type="match status" value="1"/>
</dbReference>
<dbReference type="Pfam" id="PF05938">
    <property type="entry name" value="Self-incomp_S1"/>
    <property type="match status" value="1"/>
</dbReference>
<sequence length="130" mass="15393">MKYFTIFFIFFSLCMFGHVSGAGIRIVNELKNKKTLWMRCYSKNDVLGPTIIPNGGQFTDYFFHNLFGTTRFMCTLKQGPGFSHSQSFRAFKNSGLWDWRAREDGIYLRRIYKTKFDDDTDNLHKEQSWI</sequence>